<protein>
    <recommendedName>
        <fullName>Allograft inflammatory factor 1</fullName>
        <shortName>AIF-1</shortName>
    </recommendedName>
</protein>
<feature type="initiator methionine" description="Removed" evidence="4">
    <location>
        <position position="1"/>
    </location>
</feature>
<feature type="chain" id="PRO_0000244410" description="Allograft inflammatory factor 1">
    <location>
        <begin position="2"/>
        <end position="147"/>
    </location>
</feature>
<feature type="domain" description="EF-hand 1" evidence="5">
    <location>
        <begin position="45"/>
        <end position="80"/>
    </location>
</feature>
<feature type="domain" description="EF-hand 2; degenerate" evidence="7">
    <location>
        <begin position="81"/>
        <end position="115"/>
    </location>
</feature>
<feature type="region of interest" description="Disordered" evidence="6">
    <location>
        <begin position="128"/>
        <end position="147"/>
    </location>
</feature>
<feature type="binding site" evidence="7">
    <location>
        <position position="58"/>
    </location>
    <ligand>
        <name>Ca(2+)</name>
        <dbReference type="ChEBI" id="CHEBI:29108"/>
    </ligand>
</feature>
<feature type="binding site" evidence="7">
    <location>
        <position position="60"/>
    </location>
    <ligand>
        <name>Ca(2+)</name>
        <dbReference type="ChEBI" id="CHEBI:29108"/>
    </ligand>
</feature>
<feature type="binding site" evidence="7">
    <location>
        <position position="62"/>
    </location>
    <ligand>
        <name>Ca(2+)</name>
        <dbReference type="ChEBI" id="CHEBI:29108"/>
    </ligand>
</feature>
<feature type="modified residue" description="N-acetylserine" evidence="4">
    <location>
        <position position="2"/>
    </location>
</feature>
<feature type="modified residue" description="N6-acetyllysine" evidence="3">
    <location>
        <position position="11"/>
    </location>
</feature>
<feature type="modified residue" description="Phosphoserine" evidence="3">
    <location>
        <position position="39"/>
    </location>
</feature>
<evidence type="ECO:0000250" key="1"/>
<evidence type="ECO:0000250" key="2">
    <source>
        <dbReference type="UniProtKB" id="O70200"/>
    </source>
</evidence>
<evidence type="ECO:0000250" key="3">
    <source>
        <dbReference type="UniProtKB" id="P55008"/>
    </source>
</evidence>
<evidence type="ECO:0000250" key="4">
    <source>
        <dbReference type="UniProtKB" id="P81076"/>
    </source>
</evidence>
<evidence type="ECO:0000255" key="5">
    <source>
        <dbReference type="PROSITE-ProRule" id="PRU00448"/>
    </source>
</evidence>
<evidence type="ECO:0000256" key="6">
    <source>
        <dbReference type="SAM" id="MobiDB-lite"/>
    </source>
</evidence>
<evidence type="ECO:0000305" key="7"/>
<gene>
    <name type="primary">AIF1</name>
</gene>
<accession>Q9BDK2</accession>
<name>AIF1_BOVIN</name>
<reference key="1">
    <citation type="journal article" date="2003" name="Biol. Reprod.">
        <title>Increased messenger RNA for allograft inflammatory factor-1, LERK-5, and a novel gene in 17.5-day relative to 15.5-day bovine embryos.</title>
        <authorList>
            <person name="Glover M.D."/>
            <person name="Seidel G.E. Jr."/>
        </authorList>
    </citation>
    <scope>NUCLEOTIDE SEQUENCE [MRNA]</scope>
</reference>
<reference key="2">
    <citation type="submission" date="2005-08" db="EMBL/GenBank/DDBJ databases">
        <authorList>
            <consortium name="NIH - Mammalian Gene Collection (MGC) project"/>
        </authorList>
    </citation>
    <scope>NUCLEOTIDE SEQUENCE [LARGE SCALE MRNA]</scope>
    <source>
        <strain>Crossbred X Angus</strain>
        <tissue>Ileum</tissue>
    </source>
</reference>
<keyword id="KW-0007">Acetylation</keyword>
<keyword id="KW-0106">Calcium</keyword>
<keyword id="KW-1003">Cell membrane</keyword>
<keyword id="KW-0966">Cell projection</keyword>
<keyword id="KW-0963">Cytoplasm</keyword>
<keyword id="KW-0206">Cytoskeleton</keyword>
<keyword id="KW-0472">Membrane</keyword>
<keyword id="KW-0479">Metal-binding</keyword>
<keyword id="KW-0597">Phosphoprotein</keyword>
<keyword id="KW-1185">Reference proteome</keyword>
<keyword id="KW-0677">Repeat</keyword>
<proteinExistence type="evidence at transcript level"/>
<comment type="function">
    <text evidence="1">May play a role in macrophage activation and function.</text>
</comment>
<comment type="subcellular location">
    <subcellularLocation>
        <location evidence="2">Cytoplasm</location>
        <location evidence="2">Cytoskeleton</location>
    </subcellularLocation>
    <subcellularLocation>
        <location evidence="2">Cell projection</location>
        <location evidence="2">Ruffle membrane</location>
        <topology evidence="2">Peripheral membrane protein</topology>
        <orientation evidence="2">Cytoplasmic side</orientation>
    </subcellularLocation>
    <subcellularLocation>
        <location evidence="2">Cell projection</location>
        <location evidence="2">Phagocytic cup</location>
    </subcellularLocation>
    <text evidence="2">Associated with the actin cytoskeleton at membrane ruffles and at sites of phagocytosis.</text>
</comment>
<comment type="PTM">
    <text evidence="1">Phosphorylated on serine residues.</text>
</comment>
<organism>
    <name type="scientific">Bos taurus</name>
    <name type="common">Bovine</name>
    <dbReference type="NCBI Taxonomy" id="9913"/>
    <lineage>
        <taxon>Eukaryota</taxon>
        <taxon>Metazoa</taxon>
        <taxon>Chordata</taxon>
        <taxon>Craniata</taxon>
        <taxon>Vertebrata</taxon>
        <taxon>Euteleostomi</taxon>
        <taxon>Mammalia</taxon>
        <taxon>Eutheria</taxon>
        <taxon>Laurasiatheria</taxon>
        <taxon>Artiodactyla</taxon>
        <taxon>Ruminantia</taxon>
        <taxon>Pecora</taxon>
        <taxon>Bovidae</taxon>
        <taxon>Bovinae</taxon>
        <taxon>Bos</taxon>
    </lineage>
</organism>
<sequence length="147" mass="16855">MSETRDLQGGKAFGLRKAQQEERINEINQQFLDDPKYSSDEDLPSKLEAFKKKYMEFDLNEDGGIDIMSLKRMMEKLGVPKTHLELKKLIMEVSSGPGETFSYSDFLKMMLGKRSAILKMILMYEEKAREQEKPTGLPAKKAISELP</sequence>
<dbReference type="EMBL" id="AF348450">
    <property type="protein sequence ID" value="AAK30155.1"/>
    <property type="molecule type" value="mRNA"/>
</dbReference>
<dbReference type="EMBL" id="BC102890">
    <property type="protein sequence ID" value="AAI02891.1"/>
    <property type="molecule type" value="mRNA"/>
</dbReference>
<dbReference type="RefSeq" id="NP_776410.1">
    <property type="nucleotide sequence ID" value="NM_173985.2"/>
</dbReference>
<dbReference type="SMR" id="Q9BDK2"/>
<dbReference type="FunCoup" id="Q9BDK2">
    <property type="interactions" value="359"/>
</dbReference>
<dbReference type="STRING" id="9913.ENSBTAP00000027388"/>
<dbReference type="PaxDb" id="9913-ENSBTAP00000027388"/>
<dbReference type="Ensembl" id="ENSBTAT00000027388.3">
    <property type="protein sequence ID" value="ENSBTAP00000027388.2"/>
    <property type="gene ID" value="ENSBTAG00000020554.4"/>
</dbReference>
<dbReference type="GeneID" id="280989"/>
<dbReference type="KEGG" id="bta:280989"/>
<dbReference type="CTD" id="199"/>
<dbReference type="VEuPathDB" id="HostDB:ENSBTAG00000020554"/>
<dbReference type="VGNC" id="VGNC:25759">
    <property type="gene designation" value="AIF1"/>
</dbReference>
<dbReference type="eggNOG" id="KOG0027">
    <property type="taxonomic scope" value="Eukaryota"/>
</dbReference>
<dbReference type="GeneTree" id="ENSGT00390000013846"/>
<dbReference type="HOGENOM" id="CLU_134149_0_0_1"/>
<dbReference type="InParanoid" id="Q9BDK2"/>
<dbReference type="OMA" id="RETINYH"/>
<dbReference type="OrthoDB" id="26525at2759"/>
<dbReference type="TreeFam" id="TF320736"/>
<dbReference type="Proteomes" id="UP000009136">
    <property type="component" value="Chromosome 23"/>
</dbReference>
<dbReference type="Bgee" id="ENSBTAG00000020554">
    <property type="expression patterns" value="Expressed in lung and 107 other cell types or tissues"/>
</dbReference>
<dbReference type="GO" id="GO:0005737">
    <property type="term" value="C:cytoplasm"/>
    <property type="evidence" value="ECO:0000250"/>
    <property type="project" value="UniProtKB"/>
</dbReference>
<dbReference type="GO" id="GO:0005856">
    <property type="term" value="C:cytoskeleton"/>
    <property type="evidence" value="ECO:0007669"/>
    <property type="project" value="UniProtKB-SubCell"/>
</dbReference>
<dbReference type="GO" id="GO:0005829">
    <property type="term" value="C:cytosol"/>
    <property type="evidence" value="ECO:0000250"/>
    <property type="project" value="UniProtKB"/>
</dbReference>
<dbReference type="GO" id="GO:0030027">
    <property type="term" value="C:lamellipodium"/>
    <property type="evidence" value="ECO:0000250"/>
    <property type="project" value="UniProtKB"/>
</dbReference>
<dbReference type="GO" id="GO:0005634">
    <property type="term" value="C:nucleus"/>
    <property type="evidence" value="ECO:0000250"/>
    <property type="project" value="UniProtKB"/>
</dbReference>
<dbReference type="GO" id="GO:0001891">
    <property type="term" value="C:phagocytic cup"/>
    <property type="evidence" value="ECO:0000250"/>
    <property type="project" value="UniProtKB"/>
</dbReference>
<dbReference type="GO" id="GO:0032587">
    <property type="term" value="C:ruffle membrane"/>
    <property type="evidence" value="ECO:0007669"/>
    <property type="project" value="UniProtKB-SubCell"/>
</dbReference>
<dbReference type="GO" id="GO:0051015">
    <property type="term" value="F:actin filament binding"/>
    <property type="evidence" value="ECO:0000250"/>
    <property type="project" value="UniProtKB"/>
</dbReference>
<dbReference type="GO" id="GO:0005509">
    <property type="term" value="F:calcium ion binding"/>
    <property type="evidence" value="ECO:0000318"/>
    <property type="project" value="GO_Central"/>
</dbReference>
<dbReference type="GO" id="GO:0051017">
    <property type="term" value="P:actin filament bundle assembly"/>
    <property type="evidence" value="ECO:0000250"/>
    <property type="project" value="UniProtKB"/>
</dbReference>
<dbReference type="GO" id="GO:0030041">
    <property type="term" value="P:actin filament polymerization"/>
    <property type="evidence" value="ECO:0000250"/>
    <property type="project" value="UniProtKB"/>
</dbReference>
<dbReference type="GO" id="GO:0071346">
    <property type="term" value="P:cellular response to type II interferon"/>
    <property type="evidence" value="ECO:0000250"/>
    <property type="project" value="UniProtKB"/>
</dbReference>
<dbReference type="GO" id="GO:0006954">
    <property type="term" value="P:inflammatory response"/>
    <property type="evidence" value="ECO:0000250"/>
    <property type="project" value="UniProtKB"/>
</dbReference>
<dbReference type="GO" id="GO:0006911">
    <property type="term" value="P:phagocytosis, engulfment"/>
    <property type="evidence" value="ECO:0000250"/>
    <property type="project" value="UniProtKB"/>
</dbReference>
<dbReference type="GO" id="GO:1900087">
    <property type="term" value="P:positive regulation of G1/S transition of mitotic cell cycle"/>
    <property type="evidence" value="ECO:0000250"/>
    <property type="project" value="UniProtKB"/>
</dbReference>
<dbReference type="GO" id="GO:0090026">
    <property type="term" value="P:positive regulation of monocyte chemotaxis"/>
    <property type="evidence" value="ECO:0000250"/>
    <property type="project" value="UniProtKB"/>
</dbReference>
<dbReference type="GO" id="GO:0071673">
    <property type="term" value="P:positive regulation of smooth muscle cell chemotaxis"/>
    <property type="evidence" value="ECO:0000250"/>
    <property type="project" value="UniProtKB"/>
</dbReference>
<dbReference type="GO" id="GO:0048661">
    <property type="term" value="P:positive regulation of smooth muscle cell proliferation"/>
    <property type="evidence" value="ECO:0000250"/>
    <property type="project" value="UniProtKB"/>
</dbReference>
<dbReference type="GO" id="GO:2000406">
    <property type="term" value="P:positive regulation of T cell migration"/>
    <property type="evidence" value="ECO:0000250"/>
    <property type="project" value="UniProtKB"/>
</dbReference>
<dbReference type="GO" id="GO:0042102">
    <property type="term" value="P:positive regulation of T cell proliferation"/>
    <property type="evidence" value="ECO:0000250"/>
    <property type="project" value="UniProtKB"/>
</dbReference>
<dbReference type="GO" id="GO:0016601">
    <property type="term" value="P:Rac protein signal transduction"/>
    <property type="evidence" value="ECO:0000250"/>
    <property type="project" value="UniProtKB"/>
</dbReference>
<dbReference type="GO" id="GO:0097178">
    <property type="term" value="P:ruffle assembly"/>
    <property type="evidence" value="ECO:0000250"/>
    <property type="project" value="UniProtKB"/>
</dbReference>
<dbReference type="FunFam" id="1.10.238.10:FF:000106">
    <property type="entry name" value="Allograft inflammatory factor 1"/>
    <property type="match status" value="1"/>
</dbReference>
<dbReference type="Gene3D" id="1.10.238.10">
    <property type="entry name" value="EF-hand"/>
    <property type="match status" value="1"/>
</dbReference>
<dbReference type="InterPro" id="IPR049025">
    <property type="entry name" value="AIF-1_EF_pair"/>
</dbReference>
<dbReference type="InterPro" id="IPR042433">
    <property type="entry name" value="AIF1/AIF1L"/>
</dbReference>
<dbReference type="InterPro" id="IPR011992">
    <property type="entry name" value="EF-hand-dom_pair"/>
</dbReference>
<dbReference type="InterPro" id="IPR002048">
    <property type="entry name" value="EF_hand_dom"/>
</dbReference>
<dbReference type="PANTHER" id="PTHR10356:SF4">
    <property type="entry name" value="ALLOGRAFT INFLAMMATORY FACTOR 1"/>
    <property type="match status" value="1"/>
</dbReference>
<dbReference type="PANTHER" id="PTHR10356">
    <property type="entry name" value="ALLOGRAFT INFLAMMATORY FACTOR-1"/>
    <property type="match status" value="1"/>
</dbReference>
<dbReference type="Pfam" id="PF21008">
    <property type="entry name" value="AIF-1"/>
    <property type="match status" value="1"/>
</dbReference>
<dbReference type="SUPFAM" id="SSF47473">
    <property type="entry name" value="EF-hand"/>
    <property type="match status" value="1"/>
</dbReference>
<dbReference type="PROSITE" id="PS50222">
    <property type="entry name" value="EF_HAND_2"/>
    <property type="match status" value="1"/>
</dbReference>